<sequence length="743" mass="84308">MMTQANAYFYDGADVALLNGQYTDVFSLLGMHSANEGKALIVRCFLRNAISVDVISIKDGRKVASLDKVNEQGLFAGTLGRRVKPFLYLLRVEYPLCQLDIVDPYQFDSLLNSDDIYLFGEGSAERAYEFLGANWRQTQGVEGVHFCVWAPNAKRVSVVGDFNHWDDTRHVMRQHLANGLWELFLPNVVEGAHYKFDLVYQNGERHTKSDPMATQMECAPHNASIVPPKAHHSWNDTAWMSKRAATAWHKAPMSAYEVHLGSWRRKGEQGEQYLDYQDLIEQLIPYVKEQGFTHIELMPISEFPFDGSWGYQPVGLYAPTHRFGDANGLKAFVDACHQAGIGIILDWVSAHFPKDPHGLVRFDGTCLYEHEDPRKGTHPDWDTLIYNYDRGEVRSFLLSNACYWLREFHFDGLRLDAVSSMLYLDYSREPGQWLPNAYGGRENLEAISFLQILNQRLYQAFPGICMIAEESTAFAGVTKPTDQQGLGFGFKWNMGWMNDSLSYLGRDPLYRQFHHHQLTFSLMYAYTEQFMLSVSHDEVVHGKGSLLHKIPGDDWQKFATLRAYYGFMWGHPGKKLLFMGCEFGQRNEWNHNQSLDWHLLAYEPHQGVQRWLKDLNHLYQAMPALSVQDYEGAGFSWLDCENSRDSIFTFVRYGLAGDAPLVFVINMTPQLHTGFRIGLPLAGDYREYLNSDSQIYGGSNQGNAGTVVAESLPWQGMAQSALITVPPLGCLVIGPATGLAEAN</sequence>
<reference key="1">
    <citation type="submission" date="2007-02" db="EMBL/GenBank/DDBJ databases">
        <title>Complete sequence of chromosome of Shewanella baltica OS155.</title>
        <authorList>
            <consortium name="US DOE Joint Genome Institute"/>
            <person name="Copeland A."/>
            <person name="Lucas S."/>
            <person name="Lapidus A."/>
            <person name="Barry K."/>
            <person name="Detter J.C."/>
            <person name="Glavina del Rio T."/>
            <person name="Hammon N."/>
            <person name="Israni S."/>
            <person name="Dalin E."/>
            <person name="Tice H."/>
            <person name="Pitluck S."/>
            <person name="Sims D.R."/>
            <person name="Brettin T."/>
            <person name="Bruce D."/>
            <person name="Han C."/>
            <person name="Tapia R."/>
            <person name="Brainard J."/>
            <person name="Schmutz J."/>
            <person name="Larimer F."/>
            <person name="Land M."/>
            <person name="Hauser L."/>
            <person name="Kyrpides N."/>
            <person name="Mikhailova N."/>
            <person name="Brettar I."/>
            <person name="Klappenbach J."/>
            <person name="Konstantinidis K."/>
            <person name="Rodrigues J."/>
            <person name="Tiedje J."/>
            <person name="Richardson P."/>
        </authorList>
    </citation>
    <scope>NUCLEOTIDE SEQUENCE [LARGE SCALE GENOMIC DNA]</scope>
    <source>
        <strain>OS155 / ATCC BAA-1091</strain>
    </source>
</reference>
<comment type="function">
    <text evidence="1">Catalyzes the formation of the alpha-1,6-glucosidic linkages in glycogen by scission of a 1,4-alpha-linked oligosaccharide from growing alpha-1,4-glucan chains and the subsequent attachment of the oligosaccharide to the alpha-1,6 position.</text>
</comment>
<comment type="catalytic activity">
    <reaction evidence="1">
        <text>Transfers a segment of a (1-&gt;4)-alpha-D-glucan chain to a primary hydroxy group in a similar glucan chain.</text>
        <dbReference type="EC" id="2.4.1.18"/>
    </reaction>
</comment>
<comment type="pathway">
    <text evidence="1">Glycan biosynthesis; glycogen biosynthesis.</text>
</comment>
<comment type="subunit">
    <text evidence="1">Monomer.</text>
</comment>
<comment type="similarity">
    <text evidence="1">Belongs to the glycosyl hydrolase 13 family. GlgB subfamily.</text>
</comment>
<keyword id="KW-0119">Carbohydrate metabolism</keyword>
<keyword id="KW-0320">Glycogen biosynthesis</keyword>
<keyword id="KW-0321">Glycogen metabolism</keyword>
<keyword id="KW-0328">Glycosyltransferase</keyword>
<keyword id="KW-1185">Reference proteome</keyword>
<keyword id="KW-0808">Transferase</keyword>
<accession>A3D286</accession>
<feature type="chain" id="PRO_1000044997" description="1,4-alpha-glucan branching enzyme GlgB">
    <location>
        <begin position="1"/>
        <end position="743"/>
    </location>
</feature>
<feature type="active site" description="Nucleophile" evidence="1">
    <location>
        <position position="416"/>
    </location>
</feature>
<feature type="active site" description="Proton donor" evidence="1">
    <location>
        <position position="469"/>
    </location>
</feature>
<name>GLGB_SHEB5</name>
<protein>
    <recommendedName>
        <fullName evidence="1">1,4-alpha-glucan branching enzyme GlgB</fullName>
        <ecNumber evidence="1">2.4.1.18</ecNumber>
    </recommendedName>
    <alternativeName>
        <fullName evidence="1">1,4-alpha-D-glucan:1,4-alpha-D-glucan 6-glucosyl-transferase</fullName>
    </alternativeName>
    <alternativeName>
        <fullName evidence="1">Alpha-(1-&gt;4)-glucan branching enzyme</fullName>
    </alternativeName>
    <alternativeName>
        <fullName evidence="1">Glycogen branching enzyme</fullName>
        <shortName evidence="1">BE</shortName>
    </alternativeName>
</protein>
<proteinExistence type="inferred from homology"/>
<dbReference type="EC" id="2.4.1.18" evidence="1"/>
<dbReference type="EMBL" id="CP000563">
    <property type="protein sequence ID" value="ABN60849.1"/>
    <property type="molecule type" value="Genomic_DNA"/>
</dbReference>
<dbReference type="RefSeq" id="WP_011846262.1">
    <property type="nucleotide sequence ID" value="NC_009052.1"/>
</dbReference>
<dbReference type="SMR" id="A3D286"/>
<dbReference type="STRING" id="325240.Sbal_1331"/>
<dbReference type="CAZy" id="CBM48">
    <property type="family name" value="Carbohydrate-Binding Module Family 48"/>
</dbReference>
<dbReference type="CAZy" id="GH13">
    <property type="family name" value="Glycoside Hydrolase Family 13"/>
</dbReference>
<dbReference type="KEGG" id="sbl:Sbal_1331"/>
<dbReference type="HOGENOM" id="CLU_004245_3_2_6"/>
<dbReference type="UniPathway" id="UPA00164"/>
<dbReference type="Proteomes" id="UP000001557">
    <property type="component" value="Chromosome"/>
</dbReference>
<dbReference type="GO" id="GO:0005829">
    <property type="term" value="C:cytosol"/>
    <property type="evidence" value="ECO:0007669"/>
    <property type="project" value="TreeGrafter"/>
</dbReference>
<dbReference type="GO" id="GO:0003844">
    <property type="term" value="F:1,4-alpha-glucan branching enzyme activity"/>
    <property type="evidence" value="ECO:0007669"/>
    <property type="project" value="UniProtKB-UniRule"/>
</dbReference>
<dbReference type="GO" id="GO:0043169">
    <property type="term" value="F:cation binding"/>
    <property type="evidence" value="ECO:0007669"/>
    <property type="project" value="InterPro"/>
</dbReference>
<dbReference type="GO" id="GO:0004553">
    <property type="term" value="F:hydrolase activity, hydrolyzing O-glycosyl compounds"/>
    <property type="evidence" value="ECO:0007669"/>
    <property type="project" value="InterPro"/>
</dbReference>
<dbReference type="GO" id="GO:0005978">
    <property type="term" value="P:glycogen biosynthetic process"/>
    <property type="evidence" value="ECO:0007669"/>
    <property type="project" value="UniProtKB-UniRule"/>
</dbReference>
<dbReference type="CDD" id="cd11322">
    <property type="entry name" value="AmyAc_Glg_BE"/>
    <property type="match status" value="1"/>
</dbReference>
<dbReference type="CDD" id="cd02855">
    <property type="entry name" value="E_set_GBE_prok_N"/>
    <property type="match status" value="1"/>
</dbReference>
<dbReference type="FunFam" id="2.60.40.10:FF:000169">
    <property type="entry name" value="1,4-alpha-glucan branching enzyme GlgB"/>
    <property type="match status" value="1"/>
</dbReference>
<dbReference type="FunFam" id="2.60.40.1180:FF:000002">
    <property type="entry name" value="1,4-alpha-glucan branching enzyme GlgB"/>
    <property type="match status" value="1"/>
</dbReference>
<dbReference type="FunFam" id="3.20.20.80:FF:000003">
    <property type="entry name" value="1,4-alpha-glucan branching enzyme GlgB"/>
    <property type="match status" value="1"/>
</dbReference>
<dbReference type="Gene3D" id="3.20.20.80">
    <property type="entry name" value="Glycosidases"/>
    <property type="match status" value="1"/>
</dbReference>
<dbReference type="Gene3D" id="2.60.40.1180">
    <property type="entry name" value="Golgi alpha-mannosidase II"/>
    <property type="match status" value="1"/>
</dbReference>
<dbReference type="Gene3D" id="2.60.40.10">
    <property type="entry name" value="Immunoglobulins"/>
    <property type="match status" value="1"/>
</dbReference>
<dbReference type="HAMAP" id="MF_00685">
    <property type="entry name" value="GlgB"/>
    <property type="match status" value="1"/>
</dbReference>
<dbReference type="InterPro" id="IPR006048">
    <property type="entry name" value="A-amylase/branching_C"/>
</dbReference>
<dbReference type="InterPro" id="IPR037439">
    <property type="entry name" value="Branching_enzy"/>
</dbReference>
<dbReference type="InterPro" id="IPR006407">
    <property type="entry name" value="GlgB"/>
</dbReference>
<dbReference type="InterPro" id="IPR054169">
    <property type="entry name" value="GlgB_N"/>
</dbReference>
<dbReference type="InterPro" id="IPR044143">
    <property type="entry name" value="GlgB_N_E_set_prok"/>
</dbReference>
<dbReference type="InterPro" id="IPR006047">
    <property type="entry name" value="Glyco_hydro_13_cat_dom"/>
</dbReference>
<dbReference type="InterPro" id="IPR004193">
    <property type="entry name" value="Glyco_hydro_13_N"/>
</dbReference>
<dbReference type="InterPro" id="IPR013780">
    <property type="entry name" value="Glyco_hydro_b"/>
</dbReference>
<dbReference type="InterPro" id="IPR017853">
    <property type="entry name" value="Glycoside_hydrolase_SF"/>
</dbReference>
<dbReference type="InterPro" id="IPR013783">
    <property type="entry name" value="Ig-like_fold"/>
</dbReference>
<dbReference type="InterPro" id="IPR014756">
    <property type="entry name" value="Ig_E-set"/>
</dbReference>
<dbReference type="NCBIfam" id="TIGR01515">
    <property type="entry name" value="branching_enzym"/>
    <property type="match status" value="1"/>
</dbReference>
<dbReference type="NCBIfam" id="NF003811">
    <property type="entry name" value="PRK05402.1"/>
    <property type="match status" value="1"/>
</dbReference>
<dbReference type="NCBIfam" id="NF008967">
    <property type="entry name" value="PRK12313.1"/>
    <property type="match status" value="1"/>
</dbReference>
<dbReference type="PANTHER" id="PTHR43651">
    <property type="entry name" value="1,4-ALPHA-GLUCAN-BRANCHING ENZYME"/>
    <property type="match status" value="1"/>
</dbReference>
<dbReference type="PANTHER" id="PTHR43651:SF3">
    <property type="entry name" value="1,4-ALPHA-GLUCAN-BRANCHING ENZYME"/>
    <property type="match status" value="1"/>
</dbReference>
<dbReference type="Pfam" id="PF00128">
    <property type="entry name" value="Alpha-amylase"/>
    <property type="match status" value="1"/>
</dbReference>
<dbReference type="Pfam" id="PF02806">
    <property type="entry name" value="Alpha-amylase_C"/>
    <property type="match status" value="1"/>
</dbReference>
<dbReference type="Pfam" id="PF02922">
    <property type="entry name" value="CBM_48"/>
    <property type="match status" value="1"/>
</dbReference>
<dbReference type="Pfam" id="PF22019">
    <property type="entry name" value="GlgB_N"/>
    <property type="match status" value="1"/>
</dbReference>
<dbReference type="PIRSF" id="PIRSF000463">
    <property type="entry name" value="GlgB"/>
    <property type="match status" value="1"/>
</dbReference>
<dbReference type="SMART" id="SM00642">
    <property type="entry name" value="Aamy"/>
    <property type="match status" value="1"/>
</dbReference>
<dbReference type="SUPFAM" id="SSF51445">
    <property type="entry name" value="(Trans)glycosidases"/>
    <property type="match status" value="1"/>
</dbReference>
<dbReference type="SUPFAM" id="SSF81296">
    <property type="entry name" value="E set domains"/>
    <property type="match status" value="2"/>
</dbReference>
<dbReference type="SUPFAM" id="SSF51011">
    <property type="entry name" value="Glycosyl hydrolase domain"/>
    <property type="match status" value="1"/>
</dbReference>
<evidence type="ECO:0000255" key="1">
    <source>
        <dbReference type="HAMAP-Rule" id="MF_00685"/>
    </source>
</evidence>
<organism>
    <name type="scientific">Shewanella baltica (strain OS155 / ATCC BAA-1091)</name>
    <dbReference type="NCBI Taxonomy" id="325240"/>
    <lineage>
        <taxon>Bacteria</taxon>
        <taxon>Pseudomonadati</taxon>
        <taxon>Pseudomonadota</taxon>
        <taxon>Gammaproteobacteria</taxon>
        <taxon>Alteromonadales</taxon>
        <taxon>Shewanellaceae</taxon>
        <taxon>Shewanella</taxon>
    </lineage>
</organism>
<gene>
    <name evidence="1" type="primary">glgB</name>
    <name type="ordered locus">Sbal_1331</name>
</gene>